<feature type="chain" id="PRO_0000069027" description="Muscarinic acetylcholine receptor M3">
    <location>
        <begin position="1"/>
        <end position="590"/>
    </location>
</feature>
<feature type="topological domain" description="Extracellular" evidence="1">
    <location>
        <begin position="1"/>
        <end position="67"/>
    </location>
</feature>
<feature type="transmembrane region" description="Helical; Name=1" evidence="1">
    <location>
        <begin position="68"/>
        <end position="91"/>
    </location>
</feature>
<feature type="topological domain" description="Cytoplasmic" evidence="1">
    <location>
        <begin position="92"/>
        <end position="104"/>
    </location>
</feature>
<feature type="transmembrane region" description="Helical; Name=2" evidence="1">
    <location>
        <begin position="105"/>
        <end position="125"/>
    </location>
</feature>
<feature type="topological domain" description="Extracellular" evidence="1">
    <location>
        <begin position="126"/>
        <end position="142"/>
    </location>
</feature>
<feature type="transmembrane region" description="Helical; Name=3" evidence="1">
    <location>
        <begin position="143"/>
        <end position="164"/>
    </location>
</feature>
<feature type="topological domain" description="Cytoplasmic" evidence="1">
    <location>
        <begin position="165"/>
        <end position="184"/>
    </location>
</feature>
<feature type="transmembrane region" description="Helical; Name=4" evidence="1">
    <location>
        <begin position="185"/>
        <end position="207"/>
    </location>
</feature>
<feature type="topological domain" description="Extracellular" evidence="1">
    <location>
        <begin position="208"/>
        <end position="229"/>
    </location>
</feature>
<feature type="transmembrane region" description="Helical; Name=5" evidence="1">
    <location>
        <begin position="230"/>
        <end position="252"/>
    </location>
</feature>
<feature type="topological domain" description="Cytoplasmic" evidence="1">
    <location>
        <begin position="253"/>
        <end position="492"/>
    </location>
</feature>
<feature type="transmembrane region" description="Helical; Name=6" evidence="1">
    <location>
        <begin position="493"/>
        <end position="513"/>
    </location>
</feature>
<feature type="topological domain" description="Extracellular" evidence="1">
    <location>
        <begin position="514"/>
        <end position="527"/>
    </location>
</feature>
<feature type="transmembrane region" description="Helical; Name=7" evidence="1">
    <location>
        <begin position="528"/>
        <end position="547"/>
    </location>
</feature>
<feature type="topological domain" description="Cytoplasmic" evidence="1">
    <location>
        <begin position="548"/>
        <end position="590"/>
    </location>
</feature>
<feature type="region of interest" description="Disordered" evidence="6">
    <location>
        <begin position="324"/>
        <end position="357"/>
    </location>
</feature>
<feature type="region of interest" description="Disordered" evidence="6">
    <location>
        <begin position="398"/>
        <end position="419"/>
    </location>
</feature>
<feature type="short sequence motif" description="Basolateral sorting signal" evidence="1">
    <location>
        <begin position="275"/>
        <end position="281"/>
    </location>
</feature>
<feature type="compositionally biased region" description="Low complexity" evidence="6">
    <location>
        <begin position="334"/>
        <end position="345"/>
    </location>
</feature>
<feature type="compositionally biased region" description="Polar residues" evidence="6">
    <location>
        <begin position="407"/>
        <end position="419"/>
    </location>
</feature>
<feature type="modified residue" description="Phosphoserine" evidence="3">
    <location>
        <position position="385"/>
    </location>
</feature>
<feature type="glycosylation site" description="N-linked (GlcNAc...) asparagine" evidence="4">
    <location>
        <position position="6"/>
    </location>
</feature>
<feature type="glycosylation site" description="N-linked (GlcNAc...) asparagine" evidence="4">
    <location>
        <position position="7"/>
    </location>
</feature>
<feature type="glycosylation site" description="N-linked (GlcNAc...) asparagine" evidence="4">
    <location>
        <position position="15"/>
    </location>
</feature>
<feature type="glycosylation site" description="N-linked (GlcNAc...) asparagine" evidence="4">
    <location>
        <position position="41"/>
    </location>
</feature>
<feature type="glycosylation site" description="N-linked (GlcNAc...) asparagine" evidence="4">
    <location>
        <position position="48"/>
    </location>
</feature>
<feature type="glycosylation site" description="N-linked (GlcNAc...) asparagine" evidence="4">
    <location>
        <position position="53"/>
    </location>
</feature>
<feature type="disulfide bond" evidence="5">
    <location>
        <begin position="141"/>
        <end position="221"/>
    </location>
</feature>
<feature type="sequence conflict" description="In Ref. 2; AAA30653." evidence="7" ref="2">
    <original>F</original>
    <variation>S</variation>
    <location>
        <position position="424"/>
    </location>
</feature>
<feature type="sequence conflict" description="In Ref. 2." evidence="7" ref="2">
    <original>A</original>
    <variation>G</variation>
    <location>
        <position position="438"/>
    </location>
</feature>
<feature type="sequence conflict" description="In Ref. 2." evidence="7" ref="2">
    <original>A</original>
    <variation>G</variation>
    <location>
        <position position="440"/>
    </location>
</feature>
<feature type="sequence conflict" description="In Ref. 2; AAA30653." evidence="7" ref="2">
    <original>A</original>
    <variation>G</variation>
    <location>
        <position position="452"/>
    </location>
</feature>
<feature type="sequence conflict" description="In Ref. 2; AAA30653." evidence="7" ref="2">
    <original>A</original>
    <variation>G</variation>
    <location>
        <position position="461"/>
    </location>
</feature>
<feature type="sequence conflict" description="In Ref. 2; AAA30653." evidence="7" ref="2">
    <original>F</original>
    <variation>L</variation>
    <location>
        <position position="467"/>
    </location>
</feature>
<protein>
    <recommendedName>
        <fullName>Muscarinic acetylcholine receptor M3</fullName>
    </recommendedName>
</protein>
<accession>P41984</accession>
<proteinExistence type="evidence at transcript level"/>
<name>ACM3_BOVIN</name>
<reference key="1">
    <citation type="journal article" date="1994" name="Biochim. Biophys. Acta">
        <title>Cloning and expression of a cDNA encoding bovine muscarinic acetylcholine m3 receptor.</title>
        <authorList>
            <person name="Lee P.H."/>
            <person name="Hodges P.K."/>
            <person name="Glickman F."/>
            <person name="Chang K.J."/>
        </authorList>
    </citation>
    <scope>NUCLEOTIDE SEQUENCE [MRNA]</scope>
    <source>
        <tissue>Brain</tissue>
    </source>
</reference>
<reference key="2">
    <citation type="submission" date="1994-01" db="EMBL/GenBank/DDBJ databases">
        <title>Presence of multiple muscarinic receptor subtypes in bovine chromaffin cells - analysis by polymerase chain reaction.</title>
        <authorList>
            <person name="Sui A.-L."/>
            <person name="Chou W.-Y."/>
            <person name="Kao L.-S."/>
        </authorList>
    </citation>
    <scope>NUCLEOTIDE SEQUENCE [MRNA] OF 327-467</scope>
    <source>
        <tissue>Adrenal gland</tissue>
    </source>
</reference>
<comment type="function">
    <text>The muscarinic acetylcholine receptor mediates various cellular responses, including inhibition of adenylate cyclase, breakdown of phosphoinositides and modulation of potassium channels through the action of G proteins. Primary transducing effect is Pi turnover.</text>
</comment>
<comment type="subunit">
    <text evidence="2 3">Homodimer; the dimers can form tetramers (By similarity). Interacts with NALCN (By similarity). Interacts with TMEM147 (By similarity).</text>
</comment>
<comment type="subcellular location">
    <subcellularLocation>
        <location evidence="2">Cell membrane</location>
        <topology evidence="4">Multi-pass membrane protein</topology>
    </subcellularLocation>
    <subcellularLocation>
        <location evidence="1">Postsynaptic cell membrane</location>
        <topology evidence="4">Multi-pass membrane protein</topology>
    </subcellularLocation>
    <subcellularLocation>
        <location evidence="2">Basolateral cell membrane</location>
        <topology evidence="4">Multi-pass membrane protein</topology>
    </subcellularLocation>
    <subcellularLocation>
        <location evidence="2">Endoplasmic reticulum membrane</location>
        <topology evidence="4">Multi-pass membrane protein</topology>
    </subcellularLocation>
    <text evidence="2">Colocalizes with TMEM147 in the endoplasmic reticulum (ER) membrane. TMEM147 impairs its trafficking to the cell membrane leading to its retention in the ER membrane.</text>
</comment>
<comment type="similarity">
    <text evidence="5">Belongs to the G-protein coupled receptor 1 family. Muscarinic acetylcholine receptor subfamily. CHRM3 sub-subfamily.</text>
</comment>
<gene>
    <name type="primary">CHRM3</name>
</gene>
<keyword id="KW-1003">Cell membrane</keyword>
<keyword id="KW-1015">Disulfide bond</keyword>
<keyword id="KW-0256">Endoplasmic reticulum</keyword>
<keyword id="KW-0297">G-protein coupled receptor</keyword>
<keyword id="KW-0325">Glycoprotein</keyword>
<keyword id="KW-0472">Membrane</keyword>
<keyword id="KW-0597">Phosphoprotein</keyword>
<keyword id="KW-0628">Postsynaptic cell membrane</keyword>
<keyword id="KW-0675">Receptor</keyword>
<keyword id="KW-1185">Reference proteome</keyword>
<keyword id="KW-0770">Synapse</keyword>
<keyword id="KW-0807">Transducer</keyword>
<keyword id="KW-0812">Transmembrane</keyword>
<keyword id="KW-1133">Transmembrane helix</keyword>
<sequence>MTLHNNNTTSPLFPNISSSWIHGPSDTGLPPGTVTHFGSYNISRAAGNLSSPNGTTSDPLGGHTIWQVVFIAFLTGVLALVTIIGNILVIVAFKVNKQLKTVNNYFLLSLACADLIIGVISMNLFTTYIIMNRWALGNLACDLWLSIDYVASNASVMNLLVISFDRYFSITRPLTYRAKRTTKRAGVMIGLAWVISFILWAPAILFWQYFVGKRTVPPGECFIQFLSEPTITFGTAIAAFYMPVTIMTILYWRIYKETEKRTKELAGLQASGTEAEAENFVHPTGSSRSCSSYELQQQSMKRSARRKYGRCHFWFTTKSWKPSAEQMDQDHSSSDSWNNNDAAASLENSASSDEEDIGSETRAIYSIVLKLPGHSTILNSTKLPSSDNLQVPEEELGSVGLERKPSKLQTQQSMDDGGSFQKSFSKLPIQLESAVDTAKASDVNSSVGKTTATLPLSFKEATLAKRFALKTRSQITKRKRMSLIKEKKAAQTLSAILLAFIITWTPYNIMVLVNTFCDSCIPKTYWNLGYWLCYINSTVNPVCYALCNKTFRNTFKMLLLCQCDKRKRRKQQYQQRQSVIFHKRVPEQAL</sequence>
<organism>
    <name type="scientific">Bos taurus</name>
    <name type="common">Bovine</name>
    <dbReference type="NCBI Taxonomy" id="9913"/>
    <lineage>
        <taxon>Eukaryota</taxon>
        <taxon>Metazoa</taxon>
        <taxon>Chordata</taxon>
        <taxon>Craniata</taxon>
        <taxon>Vertebrata</taxon>
        <taxon>Euteleostomi</taxon>
        <taxon>Mammalia</taxon>
        <taxon>Eutheria</taxon>
        <taxon>Laurasiatheria</taxon>
        <taxon>Artiodactyla</taxon>
        <taxon>Ruminantia</taxon>
        <taxon>Pecora</taxon>
        <taxon>Bovidae</taxon>
        <taxon>Bovinae</taxon>
        <taxon>Bos</taxon>
    </lineage>
</organism>
<dbReference type="EMBL" id="U08286">
    <property type="protein sequence ID" value="AAA51866.1"/>
    <property type="molecule type" value="mRNA"/>
</dbReference>
<dbReference type="EMBL" id="L27103">
    <property type="protein sequence ID" value="AAA30653.1"/>
    <property type="molecule type" value="mRNA"/>
</dbReference>
<dbReference type="PIR" id="S47572">
    <property type="entry name" value="S47572"/>
</dbReference>
<dbReference type="RefSeq" id="NP_776695.1">
    <property type="nucleotide sequence ID" value="NM_174270.2"/>
</dbReference>
<dbReference type="SMR" id="P41984"/>
<dbReference type="FunCoup" id="P41984">
    <property type="interactions" value="1042"/>
</dbReference>
<dbReference type="STRING" id="9913.ENSBTAP00000010601"/>
<dbReference type="GlyCosmos" id="P41984">
    <property type="glycosylation" value="6 sites, No reported glycans"/>
</dbReference>
<dbReference type="GlyGen" id="P41984">
    <property type="glycosylation" value="6 sites"/>
</dbReference>
<dbReference type="iPTMnet" id="P41984"/>
<dbReference type="PaxDb" id="9913-ENSBTAP00000010601"/>
<dbReference type="Ensembl" id="ENSBTAT00000090771.1">
    <property type="protein sequence ID" value="ENSBTAP00000077440.1"/>
    <property type="gene ID" value="ENSBTAG00000008059.6"/>
</dbReference>
<dbReference type="Ensembl" id="ENSBTAT00000093307.1">
    <property type="protein sequence ID" value="ENSBTAP00000102995.1"/>
    <property type="gene ID" value="ENSBTAG00000008059.6"/>
</dbReference>
<dbReference type="Ensembl" id="ENSBTAT00000104482.1">
    <property type="protein sequence ID" value="ENSBTAP00000103159.1"/>
    <property type="gene ID" value="ENSBTAG00000008059.6"/>
</dbReference>
<dbReference type="Ensembl" id="ENSBTAT00000112001.1">
    <property type="protein sequence ID" value="ENSBTAP00000075977.1"/>
    <property type="gene ID" value="ENSBTAG00000008059.6"/>
</dbReference>
<dbReference type="Ensembl" id="ENSBTAT00000135652.1">
    <property type="protein sequence ID" value="ENSBTAP00000079445.1"/>
    <property type="gene ID" value="ENSBTAG00000008059.6"/>
</dbReference>
<dbReference type="GeneID" id="281685"/>
<dbReference type="KEGG" id="bta:281685"/>
<dbReference type="CTD" id="1131"/>
<dbReference type="VGNC" id="VGNC:27320">
    <property type="gene designation" value="CHRM3"/>
</dbReference>
<dbReference type="eggNOG" id="KOG4220">
    <property type="taxonomic scope" value="Eukaryota"/>
</dbReference>
<dbReference type="GeneTree" id="ENSGT00940000160084"/>
<dbReference type="HOGENOM" id="CLU_009579_11_2_1"/>
<dbReference type="InParanoid" id="P41984"/>
<dbReference type="OrthoDB" id="10071887at2759"/>
<dbReference type="TreeFam" id="TF320495"/>
<dbReference type="Proteomes" id="UP000009136">
    <property type="component" value="Chromosome 28"/>
</dbReference>
<dbReference type="GO" id="GO:0016323">
    <property type="term" value="C:basolateral plasma membrane"/>
    <property type="evidence" value="ECO:0007669"/>
    <property type="project" value="UniProtKB-SubCell"/>
</dbReference>
<dbReference type="GO" id="GO:0005789">
    <property type="term" value="C:endoplasmic reticulum membrane"/>
    <property type="evidence" value="ECO:0007669"/>
    <property type="project" value="UniProtKB-SubCell"/>
</dbReference>
<dbReference type="GO" id="GO:0005886">
    <property type="term" value="C:plasma membrane"/>
    <property type="evidence" value="ECO:0000250"/>
    <property type="project" value="UniProtKB"/>
</dbReference>
<dbReference type="GO" id="GO:0045211">
    <property type="term" value="C:postsynaptic membrane"/>
    <property type="evidence" value="ECO:0007669"/>
    <property type="project" value="UniProtKB-SubCell"/>
</dbReference>
<dbReference type="GO" id="GO:0016907">
    <property type="term" value="F:G protein-coupled acetylcholine receptor activity"/>
    <property type="evidence" value="ECO:0007669"/>
    <property type="project" value="InterPro"/>
</dbReference>
<dbReference type="GO" id="GO:0004930">
    <property type="term" value="F:G protein-coupled receptor activity"/>
    <property type="evidence" value="ECO:0000318"/>
    <property type="project" value="GO_Central"/>
</dbReference>
<dbReference type="GO" id="GO:0071880">
    <property type="term" value="P:adenylate cyclase-activating adrenergic receptor signaling pathway"/>
    <property type="evidence" value="ECO:0000318"/>
    <property type="project" value="GO_Central"/>
</dbReference>
<dbReference type="GO" id="GO:0043410">
    <property type="term" value="P:positive regulation of MAPK cascade"/>
    <property type="evidence" value="ECO:0000318"/>
    <property type="project" value="GO_Central"/>
</dbReference>
<dbReference type="GO" id="GO:0045987">
    <property type="term" value="P:positive regulation of smooth muscle contraction"/>
    <property type="evidence" value="ECO:0007669"/>
    <property type="project" value="InterPro"/>
</dbReference>
<dbReference type="GO" id="GO:0046541">
    <property type="term" value="P:saliva secretion"/>
    <property type="evidence" value="ECO:0007669"/>
    <property type="project" value="InterPro"/>
</dbReference>
<dbReference type="CDD" id="cd15299">
    <property type="entry name" value="7tmA_mAChR_M3"/>
    <property type="match status" value="1"/>
</dbReference>
<dbReference type="FunFam" id="1.20.1070.10:FF:000047">
    <property type="entry name" value="Muscarinic acetylcholine receptor"/>
    <property type="match status" value="1"/>
</dbReference>
<dbReference type="FunFam" id="1.20.1070.10:FF:000103">
    <property type="entry name" value="Muscarinic acetylcholine receptor"/>
    <property type="match status" value="1"/>
</dbReference>
<dbReference type="Gene3D" id="1.20.1070.10">
    <property type="entry name" value="Rhodopsin 7-helix transmembrane proteins"/>
    <property type="match status" value="2"/>
</dbReference>
<dbReference type="InterPro" id="IPR000276">
    <property type="entry name" value="GPCR_Rhodpsn"/>
</dbReference>
<dbReference type="InterPro" id="IPR017452">
    <property type="entry name" value="GPCR_Rhodpsn_7TM"/>
</dbReference>
<dbReference type="InterPro" id="IPR001183">
    <property type="entry name" value="Musac_Ach_M3_rcpt"/>
</dbReference>
<dbReference type="InterPro" id="IPR000995">
    <property type="entry name" value="Musac_Ach_rcpt"/>
</dbReference>
<dbReference type="PANTHER" id="PTHR24247">
    <property type="entry name" value="5-HYDROXYTRYPTAMINE RECEPTOR"/>
    <property type="match status" value="1"/>
</dbReference>
<dbReference type="PANTHER" id="PTHR24247:SF183">
    <property type="entry name" value="MUSCARINIC ACETYLCHOLINE RECEPTOR M3"/>
    <property type="match status" value="1"/>
</dbReference>
<dbReference type="Pfam" id="PF00001">
    <property type="entry name" value="7tm_1"/>
    <property type="match status" value="1"/>
</dbReference>
<dbReference type="PRINTS" id="PR00237">
    <property type="entry name" value="GPCRRHODOPSN"/>
</dbReference>
<dbReference type="PRINTS" id="PR00243">
    <property type="entry name" value="MUSCARINICR"/>
</dbReference>
<dbReference type="PRINTS" id="PR00540">
    <property type="entry name" value="MUSCRINICM3R"/>
</dbReference>
<dbReference type="SMART" id="SM01381">
    <property type="entry name" value="7TM_GPCR_Srsx"/>
    <property type="match status" value="1"/>
</dbReference>
<dbReference type="SUPFAM" id="SSF81321">
    <property type="entry name" value="Family A G protein-coupled receptor-like"/>
    <property type="match status" value="1"/>
</dbReference>
<dbReference type="PROSITE" id="PS00237">
    <property type="entry name" value="G_PROTEIN_RECEP_F1_1"/>
    <property type="match status" value="1"/>
</dbReference>
<dbReference type="PROSITE" id="PS50262">
    <property type="entry name" value="G_PROTEIN_RECEP_F1_2"/>
    <property type="match status" value="1"/>
</dbReference>
<evidence type="ECO:0000250" key="1"/>
<evidence type="ECO:0000250" key="2">
    <source>
        <dbReference type="UniProtKB" id="P20309"/>
    </source>
</evidence>
<evidence type="ECO:0000250" key="3">
    <source>
        <dbReference type="UniProtKB" id="Q9ERZ3"/>
    </source>
</evidence>
<evidence type="ECO:0000255" key="4"/>
<evidence type="ECO:0000255" key="5">
    <source>
        <dbReference type="PROSITE-ProRule" id="PRU00521"/>
    </source>
</evidence>
<evidence type="ECO:0000256" key="6">
    <source>
        <dbReference type="SAM" id="MobiDB-lite"/>
    </source>
</evidence>
<evidence type="ECO:0000305" key="7"/>